<organism>
    <name type="scientific">Escherichia coli</name>
    <dbReference type="NCBI Taxonomy" id="562"/>
    <lineage>
        <taxon>Bacteria</taxon>
        <taxon>Pseudomonadati</taxon>
        <taxon>Pseudomonadota</taxon>
        <taxon>Gammaproteobacteria</taxon>
        <taxon>Enterobacterales</taxon>
        <taxon>Enterobacteriaceae</taxon>
        <taxon>Escherichia</taxon>
    </lineage>
</organism>
<accession>P16551</accession>
<feature type="chain" id="PRO_0000134873" description="Alpha-galactosidase">
    <location>
        <begin position="1"/>
        <end position="708"/>
    </location>
</feature>
<feature type="active site" description="Nucleophile" evidence="1">
    <location>
        <position position="441"/>
    </location>
</feature>
<feature type="active site" description="Proton donor" evidence="1">
    <location>
        <position position="505"/>
    </location>
</feature>
<proteinExistence type="evidence at protein level"/>
<evidence type="ECO:0000250" key="1">
    <source>
        <dbReference type="UniProtKB" id="Q9ALJ4"/>
    </source>
</evidence>
<evidence type="ECO:0000305" key="2"/>
<protein>
    <recommendedName>
        <fullName>Alpha-galactosidase</fullName>
        <ecNumber>3.2.1.22</ecNumber>
    </recommendedName>
    <alternativeName>
        <fullName>Melibiase</fullName>
    </alternativeName>
</protein>
<gene>
    <name type="primary">rafA</name>
</gene>
<dbReference type="EC" id="3.2.1.22"/>
<dbReference type="EMBL" id="M27273">
    <property type="protein sequence ID" value="AAA24497.1"/>
    <property type="molecule type" value="Genomic_DNA"/>
</dbReference>
<dbReference type="EMBL" id="M29849">
    <property type="protein sequence ID" value="AAA24501.1"/>
    <property type="molecule type" value="Genomic_DNA"/>
</dbReference>
<dbReference type="PIR" id="A43717">
    <property type="entry name" value="A43717"/>
</dbReference>
<dbReference type="RefSeq" id="WP_000624161.1">
    <property type="nucleotide sequence ID" value="NZ_QZWA01000078.1"/>
</dbReference>
<dbReference type="SMR" id="P16551"/>
<dbReference type="BindingDB" id="P16551"/>
<dbReference type="ChEMBL" id="CHEMBL4295719"/>
<dbReference type="CAZy" id="GH36">
    <property type="family name" value="Glycoside Hydrolase Family 36"/>
</dbReference>
<dbReference type="PATRIC" id="fig|562.6988.peg.1499"/>
<dbReference type="GO" id="GO:0004557">
    <property type="term" value="F:alpha-galactosidase activity"/>
    <property type="evidence" value="ECO:0007669"/>
    <property type="project" value="UniProtKB-EC"/>
</dbReference>
<dbReference type="GO" id="GO:0016052">
    <property type="term" value="P:carbohydrate catabolic process"/>
    <property type="evidence" value="ECO:0007669"/>
    <property type="project" value="InterPro"/>
</dbReference>
<dbReference type="CDD" id="cd14791">
    <property type="entry name" value="GH36"/>
    <property type="match status" value="1"/>
</dbReference>
<dbReference type="FunFam" id="3.20.20.70:FF:000118">
    <property type="entry name" value="Alpha-galactosidase"/>
    <property type="match status" value="1"/>
</dbReference>
<dbReference type="Gene3D" id="3.20.20.70">
    <property type="entry name" value="Aldolase class I"/>
    <property type="match status" value="1"/>
</dbReference>
<dbReference type="Gene3D" id="2.70.98.60">
    <property type="entry name" value="alpha-galactosidase from lactobacil brevis"/>
    <property type="match status" value="1"/>
</dbReference>
<dbReference type="InterPro" id="IPR013785">
    <property type="entry name" value="Aldolase_TIM"/>
</dbReference>
<dbReference type="InterPro" id="IPR038417">
    <property type="entry name" value="Alpga-gal_N_sf"/>
</dbReference>
<dbReference type="InterPro" id="IPR050985">
    <property type="entry name" value="Alpha-glycosidase_related"/>
</dbReference>
<dbReference type="InterPro" id="IPR000111">
    <property type="entry name" value="Glyco_hydro_27/36_CS"/>
</dbReference>
<dbReference type="InterPro" id="IPR002252">
    <property type="entry name" value="Glyco_hydro_36"/>
</dbReference>
<dbReference type="InterPro" id="IPR031704">
    <property type="entry name" value="Glyco_hydro_36_N"/>
</dbReference>
<dbReference type="InterPro" id="IPR017853">
    <property type="entry name" value="Glycoside_hydrolase_SF"/>
</dbReference>
<dbReference type="PANTHER" id="PTHR43053:SF3">
    <property type="entry name" value="ALPHA-GALACTOSIDASE C-RELATED"/>
    <property type="match status" value="1"/>
</dbReference>
<dbReference type="PANTHER" id="PTHR43053">
    <property type="entry name" value="GLYCOSIDASE FAMILY 31"/>
    <property type="match status" value="1"/>
</dbReference>
<dbReference type="Pfam" id="PF16875">
    <property type="entry name" value="Glyco_hydro_36N"/>
    <property type="match status" value="1"/>
</dbReference>
<dbReference type="Pfam" id="PF02065">
    <property type="entry name" value="Melibiase"/>
    <property type="match status" value="1"/>
</dbReference>
<dbReference type="PIRSF" id="PIRSF005536">
    <property type="entry name" value="Agal"/>
    <property type="match status" value="1"/>
</dbReference>
<dbReference type="PRINTS" id="PR00743">
    <property type="entry name" value="GLHYDRLASE36"/>
</dbReference>
<dbReference type="SUPFAM" id="SSF51445">
    <property type="entry name" value="(Trans)glycosidases"/>
    <property type="match status" value="1"/>
</dbReference>
<dbReference type="PROSITE" id="PS00512">
    <property type="entry name" value="ALPHA_GALACTOSIDASE"/>
    <property type="match status" value="1"/>
</dbReference>
<geneLocation type="plasmid">
    <name>pRSD2</name>
</geneLocation>
<sequence>MISKYCRLSSPRSDLIIKTHPHAEIIWWGSALKHFSPDDCASLERPVANGRLDIDTPLTLIAENALGLFSSPGLEGHRNGLDASPVFYTVDVEHTENTLRLTSEDSVAGLRLVSELVMTPSGILKVRHALTNLREGDWQINRFAITLPVAERAEEVMAFHGRWTREFQPHRVRLTHDAFVLENRRGRTSHEHFPALIVGTPGFSEQQGEVWAVHLGWSGNHRMRCEAKTDGRRYVQAEALWMPGEKALRKNETLYTPWLYACHSADGLNGMSQQYHRFLRDEIIRFPEQKLRPVHLNTWEGIYFNHNPDYIMQMAERAAALGVERFIIDDGWFKGRNDDRAALGDWYTDEQKYPNGLMPVINHVKSLGMEFGIWVEPEMINPDSDLFRLHPDWILSMPGYSQPTGRYQYVLNLNIPEAFDYIYKRFLWLLGEHPVDYVKWDMNRELVQAGHEGRAAADAQTRQFYRLLDLLRERFPHVEFESCASGGGRIDFEVLKRTHRFWASDNNDALERCTIQRGMSYFFPPEVMGAHIGHRRCHATFRQHSIAFRGLTALFGHMGLELDPVAADAKESDGYRRYALLYKEWRQLIHTGVLWRVDMPDSSIQVQGVVSPDQSQALFMISQLAMPDYTLPGILRFPGLAAEVRYRLRVIDHPEIQLVGEGGHTMRRLPAWMNQPLEASGEWLAKGGIQLPVLDPESAILIALERAV</sequence>
<name>RAFA_ECOLX</name>
<keyword id="KW-0903">Direct protein sequencing</keyword>
<keyword id="KW-0326">Glycosidase</keyword>
<keyword id="KW-0378">Hydrolase</keyword>
<keyword id="KW-0614">Plasmid</keyword>
<reference key="1">
    <citation type="journal article" date="1989" name="J. Bacteriol.">
        <title>Nucleotide sequences and operon structure of plasmid-borne genes mediating uptake and utilization of raffinose in Escherichia coli.</title>
        <authorList>
            <person name="Aslanidis C."/>
            <person name="Schmid K."/>
            <person name="Schmitt R."/>
        </authorList>
    </citation>
    <scope>NUCLEOTIDE SEQUENCE [GENOMIC DNA]</scope>
</reference>
<reference key="2">
    <citation type="journal article" date="1990" name="J. Bacteriol.">
        <title>Regulatory elements of the raffinose operon: nucleotide sequences of operator and repressor genes.</title>
        <authorList>
            <person name="Aslanidis C."/>
            <person name="Schmitt R."/>
        </authorList>
    </citation>
    <scope>NUCLEOTIDE SEQUENCE [GENOMIC DNA] OF 1-6</scope>
</reference>
<reference key="3">
    <citation type="journal article" date="1976" name="Eur. J. Biochem.">
        <title>Raffinose metabolism in Escherichia coli K12. Purification and properties of a new alpha-galactosidase specified by a transmissible plasmid.</title>
        <authorList>
            <person name="Schmid K."/>
            <person name="Schmitt R."/>
        </authorList>
    </citation>
    <scope>PROTEIN SEQUENCE OF 1-5</scope>
</reference>
<comment type="catalytic activity">
    <reaction>
        <text>Hydrolysis of terminal, non-reducing alpha-D-galactose residues in alpha-D-galactosides, including galactose oligosaccharides, galactomannans and galactolipids.</text>
        <dbReference type="EC" id="3.2.1.22"/>
    </reaction>
</comment>
<comment type="subunit">
    <text>Homotetramer.</text>
</comment>
<comment type="similarity">
    <text evidence="2">Belongs to the glycosyl hydrolase 36 family.</text>
</comment>